<protein>
    <recommendedName>
        <fullName evidence="1">tRNA(Met) cytidine acetyltransferase TmcA</fullName>
        <ecNumber evidence="1">2.3.1.193</ecNumber>
    </recommendedName>
</protein>
<feature type="chain" id="PRO_0000013891" description="tRNA(Met) cytidine acetyltransferase TmcA">
    <location>
        <begin position="1"/>
        <end position="656"/>
    </location>
</feature>
<feature type="domain" description="N-acetyltransferase" evidence="1">
    <location>
        <begin position="368"/>
        <end position="542"/>
    </location>
</feature>
<feature type="binding site" evidence="1">
    <location>
        <position position="145"/>
    </location>
    <ligand>
        <name>ATP</name>
        <dbReference type="ChEBI" id="CHEBI:30616"/>
    </ligand>
</feature>
<feature type="binding site" evidence="1">
    <location>
        <begin position="167"/>
        <end position="176"/>
    </location>
    <ligand>
        <name>ATP</name>
        <dbReference type="ChEBI" id="CHEBI:30616"/>
    </ligand>
</feature>
<feature type="binding site" evidence="1">
    <location>
        <position position="291"/>
    </location>
    <ligand>
        <name>ATP</name>
        <dbReference type="ChEBI" id="CHEBI:30616"/>
    </ligand>
</feature>
<feature type="binding site" evidence="1">
    <location>
        <begin position="474"/>
        <end position="476"/>
    </location>
    <ligand>
        <name>acetyl-CoA</name>
        <dbReference type="ChEBI" id="CHEBI:57288"/>
    </ligand>
</feature>
<feature type="binding site" evidence="1">
    <location>
        <begin position="481"/>
        <end position="487"/>
    </location>
    <ligand>
        <name>acetyl-CoA</name>
        <dbReference type="ChEBI" id="CHEBI:57288"/>
    </ligand>
</feature>
<feature type="binding site" evidence="1">
    <location>
        <position position="510"/>
    </location>
    <ligand>
        <name>acetyl-CoA</name>
        <dbReference type="ChEBI" id="CHEBI:57288"/>
    </ligand>
</feature>
<sequence>MPSRQLQILIRKTLPLVPDHVLIIGESGIAFSKATNLLGQEFEHILFDGRNGIHLEALAIAAGTLKMGGTLCLVLSDWENLSQQPDQDSLRWNGNQSAIATPNFIYHFKQCIERYHFPILREESAVEFPTVFYSNEHHKNATLAQQQIIENILQAEQDIYFLTAKRGRGKSALLGMLANQIQAPVYLTAPNKSAVHSVIEFSEGDIEFIAPDELALTLQTEPEFSQSAWLLVDEAAMIPLPLLQEYSRYFQHIVFSTTIHSYEGTGRGFELKFKRKIHRTFQHFELKQPLRWQENDPLEHFIDDLLLLNAEDDFQHFDYSNITYNIEENAKNLSFPCLRGKVPEGPKGDLDIASLPQALEALLTSKGSEGKYNRQFFFRDFYGLMTIAHYRTSPLDLRRLLDGKNQRFYFAEYQQNLLGAIWALEEGNMADDELIIQIQQGKRRPKGNLVPQALCFHENLSQACKLRSLRISRIAVQPNWQQKGIGQNLMQAMENADVDFLSVSFGYTDELAKFWQKCGFVLVHLGEHQEASSGCYSAIALKGISKEGLALVDTAYKQFQRNLPLSFHPFAINFEQNQLDWQLDDFDWMSLKNFANFHRTLFSSIPAMRRLLKLAGKENFPLISAYLTKKQFPINKKKGVECLRLEIKQYLERGTL</sequence>
<proteinExistence type="uncertain"/>
<gene>
    <name evidence="1" type="primary">tmcA</name>
    <name type="ordered locus">HI_1254/HI_1255/HI_1256</name>
</gene>
<accession>P44140</accession>
<accession>P44141</accession>
<accession>P44142</accession>
<keyword id="KW-0012">Acyltransferase</keyword>
<keyword id="KW-0067">ATP-binding</keyword>
<keyword id="KW-0963">Cytoplasm</keyword>
<keyword id="KW-0547">Nucleotide-binding</keyword>
<keyword id="KW-1185">Reference proteome</keyword>
<keyword id="KW-0694">RNA-binding</keyword>
<keyword id="KW-0808">Transferase</keyword>
<keyword id="KW-0819">tRNA processing</keyword>
<keyword id="KW-0820">tRNA-binding</keyword>
<evidence type="ECO:0000255" key="1">
    <source>
        <dbReference type="HAMAP-Rule" id="MF_01886"/>
    </source>
</evidence>
<evidence type="ECO:0000305" key="2"/>
<comment type="function">
    <text evidence="1">Catalyzes the formation of N(4)-acetylcytidine (ac(4)C) at the wobble position of tRNA(Met), by using acetyl-CoA as an acetyl donor and ATP (or GTP).</text>
</comment>
<comment type="catalytic activity">
    <reaction evidence="1">
        <text>cytidine(34) in elongator tRNA(Met) + acetyl-CoA + ATP + H2O = N(4)-acetylcytidine(34) in elongator tRNA(Met) + ADP + phosphate + CoA + H(+)</text>
        <dbReference type="Rhea" id="RHEA:43788"/>
        <dbReference type="Rhea" id="RHEA-COMP:10693"/>
        <dbReference type="Rhea" id="RHEA-COMP:10694"/>
        <dbReference type="ChEBI" id="CHEBI:15377"/>
        <dbReference type="ChEBI" id="CHEBI:15378"/>
        <dbReference type="ChEBI" id="CHEBI:30616"/>
        <dbReference type="ChEBI" id="CHEBI:43474"/>
        <dbReference type="ChEBI" id="CHEBI:57287"/>
        <dbReference type="ChEBI" id="CHEBI:57288"/>
        <dbReference type="ChEBI" id="CHEBI:74900"/>
        <dbReference type="ChEBI" id="CHEBI:82748"/>
        <dbReference type="ChEBI" id="CHEBI:456216"/>
        <dbReference type="EC" id="2.3.1.193"/>
    </reaction>
</comment>
<comment type="subcellular location">
    <subcellularLocation>
        <location evidence="1">Cytoplasm</location>
    </subcellularLocation>
</comment>
<comment type="similarity">
    <text evidence="1">Belongs to the RNA cytidine acetyltransferase family. TmcA subfamily.</text>
</comment>
<comment type="caution">
    <text evidence="2">Could be the product of a pseudogene. Three frameshifts produce three separate ORFs.</text>
</comment>
<comment type="sequence caution" evidence="2">
    <conflict type="frameshift">
        <sequence resource="EMBL-CDS" id="AAC22904"/>
    </conflict>
</comment>
<comment type="sequence caution" evidence="2">
    <conflict type="frameshift">
        <sequence resource="EMBL-CDS" id="AAC22910"/>
    </conflict>
</comment>
<comment type="sequence caution" evidence="2">
    <conflict type="frameshift">
        <sequence resource="EMBL-CDS" id="AAC22911"/>
    </conflict>
</comment>
<dbReference type="EC" id="2.3.1.193" evidence="1"/>
<dbReference type="EMBL" id="L42023">
    <property type="protein sequence ID" value="AAC22904.1"/>
    <property type="status" value="ALT_FRAME"/>
    <property type="molecule type" value="Genomic_DNA"/>
</dbReference>
<dbReference type="EMBL" id="L42023">
    <property type="protein sequence ID" value="AAC22910.1"/>
    <property type="status" value="ALT_FRAME"/>
    <property type="molecule type" value="Genomic_DNA"/>
</dbReference>
<dbReference type="EMBL" id="L42023">
    <property type="protein sequence ID" value="AAC22911.1"/>
    <property type="status" value="ALT_FRAME"/>
    <property type="molecule type" value="Genomic_DNA"/>
</dbReference>
<dbReference type="PIR" id="E64023">
    <property type="entry name" value="E64023"/>
</dbReference>
<dbReference type="PIR" id="F64023">
    <property type="entry name" value="F64023"/>
</dbReference>
<dbReference type="PIR" id="G64023">
    <property type="entry name" value="G64023"/>
</dbReference>
<dbReference type="SMR" id="P44140"/>
<dbReference type="STRING" id="71421.HI_1254"/>
<dbReference type="EnsemblBacteria" id="AAC22904">
    <property type="protein sequence ID" value="AAC22904"/>
    <property type="gene ID" value="HI_1254"/>
</dbReference>
<dbReference type="EnsemblBacteria" id="AAC22910">
    <property type="protein sequence ID" value="AAC22910"/>
    <property type="gene ID" value="HI_1255"/>
</dbReference>
<dbReference type="EnsemblBacteria" id="AAC22911">
    <property type="protein sequence ID" value="AAC22911"/>
    <property type="gene ID" value="HI_1256"/>
</dbReference>
<dbReference type="KEGG" id="hin:HI_1254"/>
<dbReference type="KEGG" id="hin:HI_1255"/>
<dbReference type="KEGG" id="hin:HI_1256"/>
<dbReference type="eggNOG" id="COG1444">
    <property type="taxonomic scope" value="Bacteria"/>
</dbReference>
<dbReference type="HOGENOM" id="CLU_784735_0_0_6"/>
<dbReference type="Proteomes" id="UP000000579">
    <property type="component" value="Chromosome"/>
</dbReference>
<dbReference type="GO" id="GO:0005737">
    <property type="term" value="C:cytoplasm"/>
    <property type="evidence" value="ECO:0007669"/>
    <property type="project" value="UniProtKB-SubCell"/>
</dbReference>
<dbReference type="GO" id="GO:1990883">
    <property type="term" value="F:18S rRNA cytidine N-acetyltransferase activity"/>
    <property type="evidence" value="ECO:0000318"/>
    <property type="project" value="GO_Central"/>
</dbReference>
<dbReference type="GO" id="GO:0005524">
    <property type="term" value="F:ATP binding"/>
    <property type="evidence" value="ECO:0007669"/>
    <property type="project" value="UniProtKB-UniRule"/>
</dbReference>
<dbReference type="GO" id="GO:0000049">
    <property type="term" value="F:tRNA binding"/>
    <property type="evidence" value="ECO:0000318"/>
    <property type="project" value="GO_Central"/>
</dbReference>
<dbReference type="GO" id="GO:0051392">
    <property type="term" value="F:tRNA N4-acetyltransferase activity"/>
    <property type="evidence" value="ECO:0000318"/>
    <property type="project" value="GO_Central"/>
</dbReference>
<dbReference type="GO" id="GO:1904812">
    <property type="term" value="P:rRNA acetylation involved in maturation of SSU-rRNA"/>
    <property type="evidence" value="ECO:0000318"/>
    <property type="project" value="GO_Central"/>
</dbReference>
<dbReference type="GO" id="GO:0051391">
    <property type="term" value="P:tRNA acetylation"/>
    <property type="evidence" value="ECO:0000318"/>
    <property type="project" value="GO_Central"/>
</dbReference>
<dbReference type="GO" id="GO:0002101">
    <property type="term" value="P:tRNA wobble cytosine modification"/>
    <property type="evidence" value="ECO:0000318"/>
    <property type="project" value="GO_Central"/>
</dbReference>
<dbReference type="CDD" id="cd04301">
    <property type="entry name" value="NAT_SF"/>
    <property type="match status" value="1"/>
</dbReference>
<dbReference type="FunFam" id="3.40.50.11040:FF:000003">
    <property type="entry name" value="tRNA(Met) cytidine acetyltransferase TmcA"/>
    <property type="match status" value="1"/>
</dbReference>
<dbReference type="FunFam" id="3.40.50.300:FF:001011">
    <property type="entry name" value="tRNA(Met) cytidine acetyltransferase TmcA"/>
    <property type="match status" value="1"/>
</dbReference>
<dbReference type="FunFam" id="3.40.630.30:FF:000054">
    <property type="entry name" value="tRNA(Met) cytidine acetyltransferase TmcA"/>
    <property type="match status" value="1"/>
</dbReference>
<dbReference type="Gene3D" id="3.40.50.11040">
    <property type="match status" value="1"/>
</dbReference>
<dbReference type="Gene3D" id="3.40.630.30">
    <property type="match status" value="1"/>
</dbReference>
<dbReference type="Gene3D" id="3.40.50.300">
    <property type="entry name" value="P-loop containing nucleotide triphosphate hydrolases"/>
    <property type="match status" value="1"/>
</dbReference>
<dbReference type="Gene3D" id="1.20.120.890">
    <property type="entry name" value="tRNA(Met) cytidine acetyltransferase, tail domain"/>
    <property type="match status" value="1"/>
</dbReference>
<dbReference type="HAMAP" id="MF_01886">
    <property type="entry name" value="tRNA_acetyltr_TmcA"/>
    <property type="match status" value="1"/>
</dbReference>
<dbReference type="InterPro" id="IPR016181">
    <property type="entry name" value="Acyl_CoA_acyltransferase"/>
</dbReference>
<dbReference type="InterPro" id="IPR000182">
    <property type="entry name" value="GNAT_dom"/>
</dbReference>
<dbReference type="InterPro" id="IPR007807">
    <property type="entry name" value="NAT10/TcmA_helicase"/>
</dbReference>
<dbReference type="InterPro" id="IPR027417">
    <property type="entry name" value="P-loop_NTPase"/>
</dbReference>
<dbReference type="InterPro" id="IPR032672">
    <property type="entry name" value="TmcA/NAT10/Kre33"/>
</dbReference>
<dbReference type="InterPro" id="IPR038321">
    <property type="entry name" value="TmcA_C_sf"/>
</dbReference>
<dbReference type="InterPro" id="IPR033442">
    <property type="entry name" value="TmcA_tRNA_bind"/>
</dbReference>
<dbReference type="InterPro" id="IPR024914">
    <property type="entry name" value="tRNA_acetyltr_TmcA"/>
</dbReference>
<dbReference type="PANTHER" id="PTHR10925">
    <property type="entry name" value="N-ACETYLTRANSFERASE 10"/>
    <property type="match status" value="1"/>
</dbReference>
<dbReference type="PANTHER" id="PTHR10925:SF5">
    <property type="entry name" value="RNA CYTIDINE ACETYLTRANSFERASE"/>
    <property type="match status" value="1"/>
</dbReference>
<dbReference type="Pfam" id="PF13718">
    <property type="entry name" value="GNAT_acetyltr_2"/>
    <property type="match status" value="1"/>
</dbReference>
<dbReference type="Pfam" id="PF05127">
    <property type="entry name" value="NAT10_TcmA_helicase"/>
    <property type="match status" value="1"/>
</dbReference>
<dbReference type="Pfam" id="PF17176">
    <property type="entry name" value="tRNA_bind_3"/>
    <property type="match status" value="1"/>
</dbReference>
<dbReference type="SUPFAM" id="SSF55729">
    <property type="entry name" value="Acyl-CoA N-acyltransferases (Nat)"/>
    <property type="match status" value="1"/>
</dbReference>
<dbReference type="SUPFAM" id="SSF52540">
    <property type="entry name" value="P-loop containing nucleoside triphosphate hydrolases"/>
    <property type="match status" value="1"/>
</dbReference>
<dbReference type="PROSITE" id="PS51186">
    <property type="entry name" value="GNAT"/>
    <property type="match status" value="1"/>
</dbReference>
<name>TMCA_HAEIN</name>
<reference key="1">
    <citation type="journal article" date="1995" name="Science">
        <title>Whole-genome random sequencing and assembly of Haemophilus influenzae Rd.</title>
        <authorList>
            <person name="Fleischmann R.D."/>
            <person name="Adams M.D."/>
            <person name="White O."/>
            <person name="Clayton R.A."/>
            <person name="Kirkness E.F."/>
            <person name="Kerlavage A.R."/>
            <person name="Bult C.J."/>
            <person name="Tomb J.-F."/>
            <person name="Dougherty B.A."/>
            <person name="Merrick J.M."/>
            <person name="McKenney K."/>
            <person name="Sutton G.G."/>
            <person name="FitzHugh W."/>
            <person name="Fields C.A."/>
            <person name="Gocayne J.D."/>
            <person name="Scott J.D."/>
            <person name="Shirley R."/>
            <person name="Liu L.-I."/>
            <person name="Glodek A."/>
            <person name="Kelley J.M."/>
            <person name="Weidman J.F."/>
            <person name="Phillips C.A."/>
            <person name="Spriggs T."/>
            <person name="Hedblom E."/>
            <person name="Cotton M.D."/>
            <person name="Utterback T.R."/>
            <person name="Hanna M.C."/>
            <person name="Nguyen D.T."/>
            <person name="Saudek D.M."/>
            <person name="Brandon R.C."/>
            <person name="Fine L.D."/>
            <person name="Fritchman J.L."/>
            <person name="Fuhrmann J.L."/>
            <person name="Geoghagen N.S.M."/>
            <person name="Gnehm C.L."/>
            <person name="McDonald L.A."/>
            <person name="Small K.V."/>
            <person name="Fraser C.M."/>
            <person name="Smith H.O."/>
            <person name="Venter J.C."/>
        </authorList>
    </citation>
    <scope>NUCLEOTIDE SEQUENCE [LARGE SCALE GENOMIC DNA]</scope>
    <source>
        <strain>ATCC 51907 / DSM 11121 / KW20 / Rd</strain>
    </source>
</reference>
<organism>
    <name type="scientific">Haemophilus influenzae (strain ATCC 51907 / DSM 11121 / KW20 / Rd)</name>
    <dbReference type="NCBI Taxonomy" id="71421"/>
    <lineage>
        <taxon>Bacteria</taxon>
        <taxon>Pseudomonadati</taxon>
        <taxon>Pseudomonadota</taxon>
        <taxon>Gammaproteobacteria</taxon>
        <taxon>Pasteurellales</taxon>
        <taxon>Pasteurellaceae</taxon>
        <taxon>Haemophilus</taxon>
    </lineage>
</organism>